<proteinExistence type="inferred from homology"/>
<reference key="1">
    <citation type="journal article" date="1991" name="Virus Res.">
        <title>Nucleotide sequence of human papillomavirus (HPV) type 41: an unusual HPV type without a typical E2 binding site consensus sequence.</title>
        <authorList>
            <person name="Hirt L."/>
            <person name="Hirsch-Behnam A."/>
            <person name="de Villiers E.M."/>
        </authorList>
    </citation>
    <scope>NUCLEOTIDE SEQUENCE [GENOMIC DNA]</scope>
</reference>
<feature type="chain" id="PRO_0000133608" description="Minor capsid protein L2">
    <location>
        <begin position="1"/>
        <end position="554"/>
    </location>
</feature>
<feature type="short sequence motif" description="Nuclear localization signal" evidence="1">
    <location>
        <begin position="2"/>
        <end position="10"/>
    </location>
</feature>
<feature type="short sequence motif" description="Nuclear localization signal" evidence="1">
    <location>
        <begin position="533"/>
        <end position="540"/>
    </location>
</feature>
<feature type="disulfide bond" evidence="1">
    <location>
        <begin position="19"/>
        <end position="26"/>
    </location>
</feature>
<sequence>MLARQRVKRANPEQLYKTCKATGGDCPPDVIKRYEQTTPADSILKYGSVGVFFGGLGIGTGRGGGGTVLGAGAVGGRPSISSGAIGPRDILPIESGGPSLAEEIPLLPMAPRVPRPTDPFRPSVLEEPFIIRPPERPNILHEQRFPTDAAPFDNGNTEITTIPSQYDVSGGGVDIQIIELPSVNDPGPSVVTRTQYNNPTFEVEVSTDISGETSSTDNIIVGAESGGTSVGDNAELIPLLDISRGDTIDTTILAPGEEETAFVTSTPERVPIQERLPIRPYGRQYQQVRVTDPEFLDSAAVLVSLENPVFDADITLTFEDDLQQALRSDTDLRDVRRLSRPYYQRRTTGLRVSRLGQRRGTISTRSGVQVGSAAHFFQDISPIGQAIEPIDAIELDVLGEQSGEGTIVRGDPTPSIEQDIGLTALGDNIENELQEIDLLTADGEEDQEGRDLQLVFSTGNDEVVDIMTIPIRAGGDDRPSVFIFSDDGTHIVYPTSTTATTPLVPAQPSDVPYIVVDLYSGSMDYDIHPSLLRRKRKKRKRVYFSDGRVASRPK</sequence>
<organismHost>
    <name type="scientific">Homo sapiens</name>
    <name type="common">Human</name>
    <dbReference type="NCBI Taxonomy" id="9606"/>
</organismHost>
<dbReference type="EMBL" id="X56147">
    <property type="protein sequence ID" value="CAA39618.1"/>
    <property type="molecule type" value="Genomic_DNA"/>
</dbReference>
<dbReference type="PIR" id="G43550">
    <property type="entry name" value="P2WL41"/>
</dbReference>
<dbReference type="KEGG" id="vg:1489284"/>
<dbReference type="OrthoDB" id="8047at10239"/>
<dbReference type="Proteomes" id="UP000006367">
    <property type="component" value="Genome"/>
</dbReference>
<dbReference type="GO" id="GO:0043657">
    <property type="term" value="C:host cell"/>
    <property type="evidence" value="ECO:0007669"/>
    <property type="project" value="GOC"/>
</dbReference>
<dbReference type="GO" id="GO:0044174">
    <property type="term" value="C:host cell endosome"/>
    <property type="evidence" value="ECO:0007669"/>
    <property type="project" value="UniProtKB-KW"/>
</dbReference>
<dbReference type="GO" id="GO:0044177">
    <property type="term" value="C:host cell Golgi apparatus"/>
    <property type="evidence" value="ECO:0007669"/>
    <property type="project" value="UniProtKB-SubCell"/>
</dbReference>
<dbReference type="GO" id="GO:0042025">
    <property type="term" value="C:host cell nucleus"/>
    <property type="evidence" value="ECO:0007669"/>
    <property type="project" value="UniProtKB-SubCell"/>
</dbReference>
<dbReference type="GO" id="GO:0019028">
    <property type="term" value="C:viral capsid"/>
    <property type="evidence" value="ECO:0007669"/>
    <property type="project" value="UniProtKB-UniRule"/>
</dbReference>
<dbReference type="GO" id="GO:0003677">
    <property type="term" value="F:DNA binding"/>
    <property type="evidence" value="ECO:0007669"/>
    <property type="project" value="UniProtKB-UniRule"/>
</dbReference>
<dbReference type="GO" id="GO:0005198">
    <property type="term" value="F:structural molecule activity"/>
    <property type="evidence" value="ECO:0007669"/>
    <property type="project" value="UniProtKB-UniRule"/>
</dbReference>
<dbReference type="GO" id="GO:0075521">
    <property type="term" value="P:microtubule-dependent intracellular transport of viral material towards nucleus"/>
    <property type="evidence" value="ECO:0007669"/>
    <property type="project" value="UniProtKB-UniRule"/>
</dbReference>
<dbReference type="GO" id="GO:0046718">
    <property type="term" value="P:symbiont entry into host cell"/>
    <property type="evidence" value="ECO:0007669"/>
    <property type="project" value="UniProtKB-KW"/>
</dbReference>
<dbReference type="GO" id="GO:0075732">
    <property type="term" value="P:viral penetration into host nucleus"/>
    <property type="evidence" value="ECO:0007669"/>
    <property type="project" value="UniProtKB-KW"/>
</dbReference>
<dbReference type="HAMAP" id="MF_04003">
    <property type="entry name" value="PPV_L2"/>
    <property type="match status" value="1"/>
</dbReference>
<dbReference type="InterPro" id="IPR000784">
    <property type="entry name" value="Late_L2"/>
</dbReference>
<dbReference type="Pfam" id="PF00513">
    <property type="entry name" value="Late_protein_L2"/>
    <property type="match status" value="1"/>
</dbReference>
<accession>P27558</accession>
<keyword id="KW-0167">Capsid protein</keyword>
<keyword id="KW-1176">Cytoplasmic inwards viral transport</keyword>
<keyword id="KW-1015">Disulfide bond</keyword>
<keyword id="KW-0238">DNA-binding</keyword>
<keyword id="KW-1039">Host endosome</keyword>
<keyword id="KW-1040">Host Golgi apparatus</keyword>
<keyword id="KW-1048">Host nucleus</keyword>
<keyword id="KW-0945">Host-virus interaction</keyword>
<keyword id="KW-0426">Late protein</keyword>
<keyword id="KW-1177">Microtubular inwards viral transport</keyword>
<keyword id="KW-0597">Phosphoprotein</keyword>
<keyword id="KW-1185">Reference proteome</keyword>
<keyword id="KW-1163">Viral penetration into host nucleus</keyword>
<keyword id="KW-0946">Virion</keyword>
<keyword id="KW-1160">Virus entry into host cell</keyword>
<comment type="function">
    <text evidence="1">Minor protein of the capsid that localizes along the inner surface of the virion, within the central cavities beneath the L1 pentamers. Plays a role in capsid stabilization through interaction with the major capsid protein L1. Once the virion enters the host cell, L2 escorts the genomic DNA into the nucleus by promoting escape from the endosomal compartments and traffic through the host Golgi network. Mechanistically, the C-terminus of L2 possesses a cell-penetrating peptide that protudes from the host endosome, interacts with host cytoplasmic retromer cargo and thereby mediates the capsid delivery to the host trans-Golgi network. Plays a role through its interaction with host dynein in the intracellular microtubule-dependent transport of viral capsid toward the nucleus. Mediates the viral genome import into the nucleus through binding to host importins. Once within the nucleus, L2 localizes viral genomes to host PML bodies in order to activate early gene expression for establishment of infection. Later on, promotes late gene expression by interacting with the viral E2 protein and by inhibiting its transcriptional activation functions. During virion assembly, encapsidates the genome by direct interaction with the viral DNA.</text>
</comment>
<comment type="subunit">
    <text evidence="1">Interacts with major capsid protein L1. Interacts with E2; this interaction inhibits E2 transcriptional activity but not the DNA replication function E2. Interacts with host GADD45GIP1. Interacts with host HSPA8; this interaction is required for L2 nuclear translocation. Interacts with host importins KPNB2 and KPNB3. Forms a complex with importin alpha2-beta1 heterodimers via interaction with the importin alpha2 adapter. Interacts with host DYNLT1; this interaction is essential for virus intracellular transport during entry. Interacts (via C-terminus) with host retromer subunits VPS35 and VPS29.</text>
</comment>
<comment type="subcellular location">
    <subcellularLocation>
        <location evidence="1">Virion</location>
    </subcellularLocation>
    <subcellularLocation>
        <location evidence="1">Host nucleus</location>
    </subcellularLocation>
    <subcellularLocation>
        <location evidence="1">Host early endosome</location>
    </subcellularLocation>
    <subcellularLocation>
        <location evidence="1">Host Golgi apparatus</location>
    </subcellularLocation>
</comment>
<comment type="PTM">
    <text evidence="1">Highly phosphorylated.</text>
</comment>
<comment type="similarity">
    <text evidence="1">Belongs to the papillomaviridae L2 protein family.</text>
</comment>
<evidence type="ECO:0000255" key="1">
    <source>
        <dbReference type="HAMAP-Rule" id="MF_04003"/>
    </source>
</evidence>
<name>VL2_HPV41</name>
<organism>
    <name type="scientific">Human papillomavirus type 41</name>
    <dbReference type="NCBI Taxonomy" id="10589"/>
    <lineage>
        <taxon>Viruses</taxon>
        <taxon>Monodnaviria</taxon>
        <taxon>Shotokuvirae</taxon>
        <taxon>Cossaviricota</taxon>
        <taxon>Papovaviricetes</taxon>
        <taxon>Zurhausenvirales</taxon>
        <taxon>Papillomaviridae</taxon>
        <taxon>Firstpapillomavirinae</taxon>
        <taxon>Nupapillomavirus</taxon>
        <taxon>Nupapillomavirus 1</taxon>
    </lineage>
</organism>
<protein>
    <recommendedName>
        <fullName evidence="1">Minor capsid protein L2</fullName>
    </recommendedName>
</protein>
<gene>
    <name evidence="1" type="primary">L2</name>
</gene>